<accession>A6MMX8</accession>
<proteinExistence type="inferred from homology"/>
<protein>
    <recommendedName>
        <fullName evidence="1">Large ribosomal subunit protein bL36c</fullName>
    </recommendedName>
    <alternativeName>
        <fullName evidence="2">50S ribosomal protein L36, chloroplastic</fullName>
    </alternativeName>
</protein>
<organism>
    <name type="scientific">Illicium oligandrum</name>
    <name type="common">Star anise</name>
    <dbReference type="NCBI Taxonomy" id="145286"/>
    <lineage>
        <taxon>Eukaryota</taxon>
        <taxon>Viridiplantae</taxon>
        <taxon>Streptophyta</taxon>
        <taxon>Embryophyta</taxon>
        <taxon>Tracheophyta</taxon>
        <taxon>Spermatophyta</taxon>
        <taxon>Magnoliopsida</taxon>
        <taxon>Austrobaileyales</taxon>
        <taxon>Schisandraceae</taxon>
        <taxon>Illicium</taxon>
    </lineage>
</organism>
<name>RK36_ILLOL</name>
<comment type="subcellular location">
    <subcellularLocation>
        <location>Plastid</location>
        <location>Chloroplast</location>
    </subcellularLocation>
</comment>
<comment type="similarity">
    <text evidence="1">Belongs to the bacterial ribosomal protein bL36 family.</text>
</comment>
<sequence length="37" mass="4471">MKIRASVRKICEKCRLIRRRGRIIVICPNPRHKQRQG</sequence>
<geneLocation type="chloroplast"/>
<keyword id="KW-0150">Chloroplast</keyword>
<keyword id="KW-0934">Plastid</keyword>
<keyword id="KW-0687">Ribonucleoprotein</keyword>
<keyword id="KW-0689">Ribosomal protein</keyword>
<evidence type="ECO:0000255" key="1">
    <source>
        <dbReference type="HAMAP-Rule" id="MF_00251"/>
    </source>
</evidence>
<evidence type="ECO:0000305" key="2"/>
<dbReference type="EMBL" id="EF380354">
    <property type="protein sequence ID" value="ABQ52552.1"/>
    <property type="molecule type" value="Genomic_DNA"/>
</dbReference>
<dbReference type="RefSeq" id="YP_001294304.1">
    <property type="nucleotide sequence ID" value="NC_009600.1"/>
</dbReference>
<dbReference type="SMR" id="A6MMX8"/>
<dbReference type="GeneID" id="5236756"/>
<dbReference type="GO" id="GO:0009507">
    <property type="term" value="C:chloroplast"/>
    <property type="evidence" value="ECO:0007669"/>
    <property type="project" value="UniProtKB-SubCell"/>
</dbReference>
<dbReference type="GO" id="GO:1990904">
    <property type="term" value="C:ribonucleoprotein complex"/>
    <property type="evidence" value="ECO:0007669"/>
    <property type="project" value="UniProtKB-KW"/>
</dbReference>
<dbReference type="GO" id="GO:0005840">
    <property type="term" value="C:ribosome"/>
    <property type="evidence" value="ECO:0007669"/>
    <property type="project" value="UniProtKB-KW"/>
</dbReference>
<dbReference type="GO" id="GO:0003735">
    <property type="term" value="F:structural constituent of ribosome"/>
    <property type="evidence" value="ECO:0007669"/>
    <property type="project" value="InterPro"/>
</dbReference>
<dbReference type="GO" id="GO:0006412">
    <property type="term" value="P:translation"/>
    <property type="evidence" value="ECO:0007669"/>
    <property type="project" value="UniProtKB-UniRule"/>
</dbReference>
<dbReference type="HAMAP" id="MF_00251">
    <property type="entry name" value="Ribosomal_bL36"/>
    <property type="match status" value="1"/>
</dbReference>
<dbReference type="InterPro" id="IPR000473">
    <property type="entry name" value="Ribosomal_bL36"/>
</dbReference>
<dbReference type="InterPro" id="IPR035977">
    <property type="entry name" value="Ribosomal_bL36_sp"/>
</dbReference>
<dbReference type="NCBIfam" id="TIGR01022">
    <property type="entry name" value="rpmJ_bact"/>
    <property type="match status" value="1"/>
</dbReference>
<dbReference type="PANTHER" id="PTHR42888">
    <property type="entry name" value="50S RIBOSOMAL PROTEIN L36, CHLOROPLASTIC"/>
    <property type="match status" value="1"/>
</dbReference>
<dbReference type="PANTHER" id="PTHR42888:SF1">
    <property type="entry name" value="LARGE RIBOSOMAL SUBUNIT PROTEIN BL36C"/>
    <property type="match status" value="1"/>
</dbReference>
<dbReference type="Pfam" id="PF00444">
    <property type="entry name" value="Ribosomal_L36"/>
    <property type="match status" value="1"/>
</dbReference>
<dbReference type="SUPFAM" id="SSF57840">
    <property type="entry name" value="Ribosomal protein L36"/>
    <property type="match status" value="1"/>
</dbReference>
<dbReference type="PROSITE" id="PS00828">
    <property type="entry name" value="RIBOSOMAL_L36"/>
    <property type="match status" value="1"/>
</dbReference>
<reference key="1">
    <citation type="journal article" date="2007" name="Mol. Phylogenet. Evol.">
        <title>Phylogenetic and evolutionary implications of complete chloroplast genome sequences of four early-diverging angiosperms: Buxus (Buxaceae), Chloranthus (Chloranthaceae), Dioscorea (Dioscoreaceae), and Illicium (Schisandraceae).</title>
        <authorList>
            <person name="Hansen D.R."/>
            <person name="Dastidar S.G."/>
            <person name="Cai Z."/>
            <person name="Penaflor C."/>
            <person name="Kuehl J.V."/>
            <person name="Boore J.L."/>
            <person name="Jansen R.K."/>
        </authorList>
    </citation>
    <scope>NUCLEOTIDE SEQUENCE [LARGE SCALE GENOMIC DNA]</scope>
</reference>
<feature type="chain" id="PRO_0000344763" description="Large ribosomal subunit protein bL36c">
    <location>
        <begin position="1"/>
        <end position="37"/>
    </location>
</feature>
<gene>
    <name evidence="1" type="primary">rpl36</name>
</gene>